<comment type="function">
    <text evidence="1">Presumably involved in the processing and regular turnover of intracellular proteins. Catalyzes the removal of unsubstituted N-terminal amino acids from various peptides.</text>
</comment>
<comment type="catalytic activity">
    <reaction evidence="1">
        <text>Release of an N-terminal amino acid, Xaa-|-Yaa-, in which Xaa is preferably Leu, but may be other amino acids including Pro although not Arg or Lys, and Yaa may be Pro. Amino acid amides and methyl esters are also readily hydrolyzed, but rates on arylamides are exceedingly low.</text>
        <dbReference type="EC" id="3.4.11.1"/>
    </reaction>
</comment>
<comment type="catalytic activity">
    <reaction evidence="1">
        <text>Release of an N-terminal amino acid, preferentially leucine, but not glutamic or aspartic acids.</text>
        <dbReference type="EC" id="3.4.11.10"/>
    </reaction>
</comment>
<comment type="cofactor">
    <cofactor evidence="1">
        <name>Mn(2+)</name>
        <dbReference type="ChEBI" id="CHEBI:29035"/>
    </cofactor>
    <text evidence="1">Binds 2 manganese ions per subunit.</text>
</comment>
<comment type="subcellular location">
    <subcellularLocation>
        <location evidence="1">Cytoplasm</location>
    </subcellularLocation>
</comment>
<comment type="similarity">
    <text evidence="1">Belongs to the peptidase M17 family.</text>
</comment>
<gene>
    <name evidence="1" type="primary">pepA</name>
    <name type="ordered locus">PputGB1_0986</name>
</gene>
<name>AMPA_PSEPG</name>
<proteinExistence type="inferred from homology"/>
<keyword id="KW-0031">Aminopeptidase</keyword>
<keyword id="KW-0963">Cytoplasm</keyword>
<keyword id="KW-0378">Hydrolase</keyword>
<keyword id="KW-0464">Manganese</keyword>
<keyword id="KW-0479">Metal-binding</keyword>
<keyword id="KW-0645">Protease</keyword>
<dbReference type="EC" id="3.4.11.1" evidence="1"/>
<dbReference type="EC" id="3.4.11.10" evidence="1"/>
<dbReference type="EMBL" id="CP000926">
    <property type="protein sequence ID" value="ABY96896.1"/>
    <property type="molecule type" value="Genomic_DNA"/>
</dbReference>
<dbReference type="RefSeq" id="WP_012270681.1">
    <property type="nucleotide sequence ID" value="NC_010322.1"/>
</dbReference>
<dbReference type="SMR" id="B0KQK8"/>
<dbReference type="MEROPS" id="M17.003"/>
<dbReference type="KEGG" id="ppg:PputGB1_0986"/>
<dbReference type="eggNOG" id="COG0260">
    <property type="taxonomic scope" value="Bacteria"/>
</dbReference>
<dbReference type="HOGENOM" id="CLU_013734_2_2_6"/>
<dbReference type="Proteomes" id="UP000002157">
    <property type="component" value="Chromosome"/>
</dbReference>
<dbReference type="GO" id="GO:0005737">
    <property type="term" value="C:cytoplasm"/>
    <property type="evidence" value="ECO:0007669"/>
    <property type="project" value="UniProtKB-SubCell"/>
</dbReference>
<dbReference type="GO" id="GO:0030145">
    <property type="term" value="F:manganese ion binding"/>
    <property type="evidence" value="ECO:0007669"/>
    <property type="project" value="UniProtKB-UniRule"/>
</dbReference>
<dbReference type="GO" id="GO:0070006">
    <property type="term" value="F:metalloaminopeptidase activity"/>
    <property type="evidence" value="ECO:0007669"/>
    <property type="project" value="InterPro"/>
</dbReference>
<dbReference type="GO" id="GO:0006508">
    <property type="term" value="P:proteolysis"/>
    <property type="evidence" value="ECO:0007669"/>
    <property type="project" value="UniProtKB-KW"/>
</dbReference>
<dbReference type="CDD" id="cd00433">
    <property type="entry name" value="Peptidase_M17"/>
    <property type="match status" value="1"/>
</dbReference>
<dbReference type="FunFam" id="3.40.630.10:FF:000004">
    <property type="entry name" value="Probable cytosol aminopeptidase"/>
    <property type="match status" value="1"/>
</dbReference>
<dbReference type="Gene3D" id="3.40.220.10">
    <property type="entry name" value="Leucine Aminopeptidase, subunit E, domain 1"/>
    <property type="match status" value="1"/>
</dbReference>
<dbReference type="Gene3D" id="3.40.630.10">
    <property type="entry name" value="Zn peptidases"/>
    <property type="match status" value="1"/>
</dbReference>
<dbReference type="HAMAP" id="MF_00181">
    <property type="entry name" value="Cytosol_peptidase_M17"/>
    <property type="match status" value="1"/>
</dbReference>
<dbReference type="InterPro" id="IPR011356">
    <property type="entry name" value="Leucine_aapep/pepB"/>
</dbReference>
<dbReference type="InterPro" id="IPR043472">
    <property type="entry name" value="Macro_dom-like"/>
</dbReference>
<dbReference type="InterPro" id="IPR000819">
    <property type="entry name" value="Peptidase_M17_C"/>
</dbReference>
<dbReference type="InterPro" id="IPR023042">
    <property type="entry name" value="Peptidase_M17_leu_NH2_pept"/>
</dbReference>
<dbReference type="InterPro" id="IPR008283">
    <property type="entry name" value="Peptidase_M17_N"/>
</dbReference>
<dbReference type="NCBIfam" id="NF002073">
    <property type="entry name" value="PRK00913.1-2"/>
    <property type="match status" value="1"/>
</dbReference>
<dbReference type="NCBIfam" id="NF002074">
    <property type="entry name" value="PRK00913.1-4"/>
    <property type="match status" value="1"/>
</dbReference>
<dbReference type="NCBIfam" id="NF002077">
    <property type="entry name" value="PRK00913.2-4"/>
    <property type="match status" value="1"/>
</dbReference>
<dbReference type="PANTHER" id="PTHR11963:SF23">
    <property type="entry name" value="CYTOSOL AMINOPEPTIDASE"/>
    <property type="match status" value="1"/>
</dbReference>
<dbReference type="PANTHER" id="PTHR11963">
    <property type="entry name" value="LEUCINE AMINOPEPTIDASE-RELATED"/>
    <property type="match status" value="1"/>
</dbReference>
<dbReference type="Pfam" id="PF00883">
    <property type="entry name" value="Peptidase_M17"/>
    <property type="match status" value="1"/>
</dbReference>
<dbReference type="Pfam" id="PF02789">
    <property type="entry name" value="Peptidase_M17_N"/>
    <property type="match status" value="1"/>
</dbReference>
<dbReference type="PRINTS" id="PR00481">
    <property type="entry name" value="LAMNOPPTDASE"/>
</dbReference>
<dbReference type="SUPFAM" id="SSF52949">
    <property type="entry name" value="Macro domain-like"/>
    <property type="match status" value="1"/>
</dbReference>
<dbReference type="SUPFAM" id="SSF53187">
    <property type="entry name" value="Zn-dependent exopeptidases"/>
    <property type="match status" value="1"/>
</dbReference>
<dbReference type="PROSITE" id="PS00631">
    <property type="entry name" value="CYTOSOL_AP"/>
    <property type="match status" value="1"/>
</dbReference>
<feature type="chain" id="PRO_1000077279" description="Probable cytosol aminopeptidase">
    <location>
        <begin position="1"/>
        <end position="497"/>
    </location>
</feature>
<feature type="active site" evidence="1">
    <location>
        <position position="279"/>
    </location>
</feature>
<feature type="active site" evidence="1">
    <location>
        <position position="353"/>
    </location>
</feature>
<feature type="binding site" evidence="1">
    <location>
        <position position="267"/>
    </location>
    <ligand>
        <name>Mn(2+)</name>
        <dbReference type="ChEBI" id="CHEBI:29035"/>
        <label>2</label>
    </ligand>
</feature>
<feature type="binding site" evidence="1">
    <location>
        <position position="272"/>
    </location>
    <ligand>
        <name>Mn(2+)</name>
        <dbReference type="ChEBI" id="CHEBI:29035"/>
        <label>1</label>
    </ligand>
</feature>
<feature type="binding site" evidence="1">
    <location>
        <position position="272"/>
    </location>
    <ligand>
        <name>Mn(2+)</name>
        <dbReference type="ChEBI" id="CHEBI:29035"/>
        <label>2</label>
    </ligand>
</feature>
<feature type="binding site" evidence="1">
    <location>
        <position position="290"/>
    </location>
    <ligand>
        <name>Mn(2+)</name>
        <dbReference type="ChEBI" id="CHEBI:29035"/>
        <label>2</label>
    </ligand>
</feature>
<feature type="binding site" evidence="1">
    <location>
        <position position="349"/>
    </location>
    <ligand>
        <name>Mn(2+)</name>
        <dbReference type="ChEBI" id="CHEBI:29035"/>
        <label>1</label>
    </ligand>
</feature>
<feature type="binding site" evidence="1">
    <location>
        <position position="351"/>
    </location>
    <ligand>
        <name>Mn(2+)</name>
        <dbReference type="ChEBI" id="CHEBI:29035"/>
        <label>1</label>
    </ligand>
</feature>
<feature type="binding site" evidence="1">
    <location>
        <position position="351"/>
    </location>
    <ligand>
        <name>Mn(2+)</name>
        <dbReference type="ChEBI" id="CHEBI:29035"/>
        <label>2</label>
    </ligand>
</feature>
<reference key="1">
    <citation type="submission" date="2008-01" db="EMBL/GenBank/DDBJ databases">
        <title>Complete sequence of Pseudomonas putida GB-1.</title>
        <authorList>
            <consortium name="US DOE Joint Genome Institute"/>
            <person name="Copeland A."/>
            <person name="Lucas S."/>
            <person name="Lapidus A."/>
            <person name="Barry K."/>
            <person name="Glavina del Rio T."/>
            <person name="Dalin E."/>
            <person name="Tice H."/>
            <person name="Pitluck S."/>
            <person name="Bruce D."/>
            <person name="Goodwin L."/>
            <person name="Chertkov O."/>
            <person name="Brettin T."/>
            <person name="Detter J.C."/>
            <person name="Han C."/>
            <person name="Kuske C.R."/>
            <person name="Schmutz J."/>
            <person name="Larimer F."/>
            <person name="Land M."/>
            <person name="Hauser L."/>
            <person name="Kyrpides N."/>
            <person name="Kim E."/>
            <person name="McCarthy J.K."/>
            <person name="Richardson P."/>
        </authorList>
    </citation>
    <scope>NUCLEOTIDE SEQUENCE [LARGE SCALE GENOMIC DNA]</scope>
    <source>
        <strain>GB-1</strain>
    </source>
</reference>
<accession>B0KQK8</accession>
<protein>
    <recommendedName>
        <fullName evidence="1">Probable cytosol aminopeptidase</fullName>
        <ecNumber evidence="1">3.4.11.1</ecNumber>
    </recommendedName>
    <alternativeName>
        <fullName evidence="1">Leucine aminopeptidase</fullName>
        <shortName evidence="1">LAP</shortName>
        <ecNumber evidence="1">3.4.11.10</ecNumber>
    </alternativeName>
    <alternativeName>
        <fullName evidence="1">Leucyl aminopeptidase</fullName>
    </alternativeName>
</protein>
<organism>
    <name type="scientific">Pseudomonas putida (strain GB-1)</name>
    <dbReference type="NCBI Taxonomy" id="76869"/>
    <lineage>
        <taxon>Bacteria</taxon>
        <taxon>Pseudomonadati</taxon>
        <taxon>Pseudomonadota</taxon>
        <taxon>Gammaproteobacteria</taxon>
        <taxon>Pseudomonadales</taxon>
        <taxon>Pseudomonadaceae</taxon>
        <taxon>Pseudomonas</taxon>
    </lineage>
</organism>
<sequence length="497" mass="52327">MELVVKSVAAASVKTATLVIPVGENRKLGAVAKAVDQASEGAISAVLKRGDLAGKPGQTLLLQNLAGLKAERVLLVGSGKEEALGDRAWRKLVASVAGVLKGLNGADAVLALDDIAVSNRDAHYGKYRLLAETLLDGEYVFDRFKSQKAEPRALKKVTLLADKAGQAEVERAVKHASAIATGMAFTRDLGNLPPNLCHPSFLAEQAKDLGKAHKGLKVEVLDEKKIKDLGMGAFYAVGQGSDQPPRLIVLNYQGGKKADKPFVLVGKGITFDTGGISLKPGAGMDEMKYDMCGAASVFGTLRAVLELQLPINLVCLLACAENMPSGGATRPGDIVTTMSGQTVEILNTDAEGRLVLCDTLTYAERFKPQAVIDIATLTGACIVALGSHTSGLMGNNDDLVGQLLDAGKRADDRAWQLPLFDEYQEQLDSPFADMGNIGGPKAGTITAGCFLSRFAKAYNWAHMDIAGTAWVSGGKDKGATGRPVPLLTQYLLDRAGA</sequence>
<evidence type="ECO:0000255" key="1">
    <source>
        <dbReference type="HAMAP-Rule" id="MF_00181"/>
    </source>
</evidence>